<dbReference type="EMBL" id="CR378665">
    <property type="protein sequence ID" value="CAG19167.1"/>
    <property type="molecule type" value="Genomic_DNA"/>
</dbReference>
<dbReference type="RefSeq" id="WP_011217509.1">
    <property type="nucleotide sequence ID" value="NC_006370.1"/>
</dbReference>
<dbReference type="SMR" id="Q6LU58"/>
<dbReference type="STRING" id="298386.PBPRA0754"/>
<dbReference type="KEGG" id="ppr:PBPRA0754"/>
<dbReference type="eggNOG" id="COG0443">
    <property type="taxonomic scope" value="Bacteria"/>
</dbReference>
<dbReference type="HOGENOM" id="CLU_005965_2_1_6"/>
<dbReference type="Proteomes" id="UP000000593">
    <property type="component" value="Chromosome 1"/>
</dbReference>
<dbReference type="GO" id="GO:0005524">
    <property type="term" value="F:ATP binding"/>
    <property type="evidence" value="ECO:0007669"/>
    <property type="project" value="UniProtKB-KW"/>
</dbReference>
<dbReference type="GO" id="GO:0016887">
    <property type="term" value="F:ATP hydrolysis activity"/>
    <property type="evidence" value="ECO:0007669"/>
    <property type="project" value="UniProtKB-UniRule"/>
</dbReference>
<dbReference type="GO" id="GO:0140662">
    <property type="term" value="F:ATP-dependent protein folding chaperone"/>
    <property type="evidence" value="ECO:0007669"/>
    <property type="project" value="InterPro"/>
</dbReference>
<dbReference type="GO" id="GO:0051082">
    <property type="term" value="F:unfolded protein binding"/>
    <property type="evidence" value="ECO:0007669"/>
    <property type="project" value="InterPro"/>
</dbReference>
<dbReference type="GO" id="GO:0016226">
    <property type="term" value="P:iron-sulfur cluster assembly"/>
    <property type="evidence" value="ECO:0007669"/>
    <property type="project" value="InterPro"/>
</dbReference>
<dbReference type="CDD" id="cd10236">
    <property type="entry name" value="ASKHA_NBD_HSP70_HscA"/>
    <property type="match status" value="1"/>
</dbReference>
<dbReference type="FunFam" id="3.30.420.40:FF:000046">
    <property type="entry name" value="Chaperone protein HscA"/>
    <property type="match status" value="1"/>
</dbReference>
<dbReference type="FunFam" id="2.60.34.10:FF:000005">
    <property type="entry name" value="Chaperone protein HscA homolog"/>
    <property type="match status" value="1"/>
</dbReference>
<dbReference type="Gene3D" id="1.20.1270.10">
    <property type="match status" value="1"/>
</dbReference>
<dbReference type="Gene3D" id="3.30.420.40">
    <property type="match status" value="2"/>
</dbReference>
<dbReference type="Gene3D" id="3.90.640.10">
    <property type="entry name" value="Actin, Chain A, domain 4"/>
    <property type="match status" value="1"/>
</dbReference>
<dbReference type="Gene3D" id="2.60.34.10">
    <property type="entry name" value="Substrate Binding Domain Of DNAk, Chain A, domain 1"/>
    <property type="match status" value="1"/>
</dbReference>
<dbReference type="HAMAP" id="MF_00679">
    <property type="entry name" value="HscA"/>
    <property type="match status" value="1"/>
</dbReference>
<dbReference type="InterPro" id="IPR043129">
    <property type="entry name" value="ATPase_NBD"/>
</dbReference>
<dbReference type="InterPro" id="IPR018181">
    <property type="entry name" value="Heat_shock_70_CS"/>
</dbReference>
<dbReference type="InterPro" id="IPR042039">
    <property type="entry name" value="HscA_NBD"/>
</dbReference>
<dbReference type="InterPro" id="IPR029048">
    <property type="entry name" value="HSP70_C_sf"/>
</dbReference>
<dbReference type="InterPro" id="IPR029047">
    <property type="entry name" value="HSP70_peptide-bd_sf"/>
</dbReference>
<dbReference type="InterPro" id="IPR013126">
    <property type="entry name" value="Hsp_70_fam"/>
</dbReference>
<dbReference type="InterPro" id="IPR010236">
    <property type="entry name" value="ISC_FeS_clus_asmbl_HscA"/>
</dbReference>
<dbReference type="NCBIfam" id="TIGR01991">
    <property type="entry name" value="HscA"/>
    <property type="match status" value="1"/>
</dbReference>
<dbReference type="NCBIfam" id="NF003520">
    <property type="entry name" value="PRK05183.1"/>
    <property type="match status" value="1"/>
</dbReference>
<dbReference type="PANTHER" id="PTHR19375">
    <property type="entry name" value="HEAT SHOCK PROTEIN 70KDA"/>
    <property type="match status" value="1"/>
</dbReference>
<dbReference type="Pfam" id="PF00012">
    <property type="entry name" value="HSP70"/>
    <property type="match status" value="1"/>
</dbReference>
<dbReference type="PRINTS" id="PR00301">
    <property type="entry name" value="HEATSHOCK70"/>
</dbReference>
<dbReference type="SUPFAM" id="SSF53067">
    <property type="entry name" value="Actin-like ATPase domain"/>
    <property type="match status" value="2"/>
</dbReference>
<dbReference type="SUPFAM" id="SSF100934">
    <property type="entry name" value="Heat shock protein 70kD (HSP70), C-terminal subdomain"/>
    <property type="match status" value="1"/>
</dbReference>
<dbReference type="SUPFAM" id="SSF100920">
    <property type="entry name" value="Heat shock protein 70kD (HSP70), peptide-binding domain"/>
    <property type="match status" value="1"/>
</dbReference>
<dbReference type="PROSITE" id="PS00297">
    <property type="entry name" value="HSP70_1"/>
    <property type="match status" value="1"/>
</dbReference>
<dbReference type="PROSITE" id="PS00329">
    <property type="entry name" value="HSP70_2"/>
    <property type="match status" value="1"/>
</dbReference>
<gene>
    <name evidence="1" type="primary">hscA</name>
    <name type="ordered locus">PBPRA0754</name>
</gene>
<protein>
    <recommendedName>
        <fullName evidence="1">Chaperone protein HscA homolog</fullName>
    </recommendedName>
</protein>
<accession>Q6LU58</accession>
<evidence type="ECO:0000255" key="1">
    <source>
        <dbReference type="HAMAP-Rule" id="MF_00679"/>
    </source>
</evidence>
<organism>
    <name type="scientific">Photobacterium profundum (strain SS9)</name>
    <dbReference type="NCBI Taxonomy" id="298386"/>
    <lineage>
        <taxon>Bacteria</taxon>
        <taxon>Pseudomonadati</taxon>
        <taxon>Pseudomonadota</taxon>
        <taxon>Gammaproteobacteria</taxon>
        <taxon>Vibrionales</taxon>
        <taxon>Vibrionaceae</taxon>
        <taxon>Photobacterium</taxon>
    </lineage>
</organism>
<feature type="chain" id="PRO_0000078638" description="Chaperone protein HscA homolog">
    <location>
        <begin position="1"/>
        <end position="617"/>
    </location>
</feature>
<keyword id="KW-0067">ATP-binding</keyword>
<keyword id="KW-0143">Chaperone</keyword>
<keyword id="KW-0547">Nucleotide-binding</keyword>
<keyword id="KW-1185">Reference proteome</keyword>
<comment type="function">
    <text evidence="1">Chaperone involved in the maturation of iron-sulfur cluster-containing proteins. Has a low intrinsic ATPase activity which is markedly stimulated by HscB.</text>
</comment>
<comment type="similarity">
    <text evidence="1">Belongs to the heat shock protein 70 family.</text>
</comment>
<sequence>MALLQIAEPGQSAAPHQHRLAVGIDLGTTNSLVAAVRSGVPETLKDDKGRSILPSIVHYGEESLLVGHEARELAQQDPSNTIFSVKRMMGRSLADIQQRYPHLPYQFEASDNGLPQLMTPTGKVNPVQVSAEILKTLNARAVATLGGDLEGVVITVPAYFDDAQRAGTKDAAKLANLNVLRLLNEPTAAAIAYGLDSGQEGVIAVYDLGGGTFDISVLRLSKGVFEVLATGGDSALGGDDFDHLLADWIKEQAGYIGDLTAQQMRMVQDAATDAKIALTDADTAQIDVLNWQGIVTREQFNALIQPLVKKTLMSCRRAIKDSGIEISDTIETVMVGGSTRVPLVREMVGNYFGKEPLTSIDPDKVVAIGASIQADILVGNKPDSDMLLLDVIPLSLGIETMGGMIEKIIPRNTTIPVARAQEFTTFKDGQTAMSVHVVQGEREMVSDCRSLARFTLRGIPAMTAGAAHIRVTYQVDADGLLSVTAMEKSSNVQSSIQVKPSYGLSDNEVATMIRESMTHAQDDKDARTLAEQYVEADRVLEGLITALAIDGDTLLSKEERETLEGVMMELVQLRKGTDYRSIEQGIKKTDKASQEFASRRMDKSIRQALAGQSIDEV</sequence>
<name>HSCA_PHOPR</name>
<proteinExistence type="inferred from homology"/>
<reference key="1">
    <citation type="journal article" date="2005" name="Science">
        <title>Life at depth: Photobacterium profundum genome sequence and expression analysis.</title>
        <authorList>
            <person name="Vezzi A."/>
            <person name="Campanaro S."/>
            <person name="D'Angelo M."/>
            <person name="Simonato F."/>
            <person name="Vitulo N."/>
            <person name="Lauro F.M."/>
            <person name="Cestaro A."/>
            <person name="Malacrida G."/>
            <person name="Simionati B."/>
            <person name="Cannata N."/>
            <person name="Romualdi C."/>
            <person name="Bartlett D.H."/>
            <person name="Valle G."/>
        </authorList>
    </citation>
    <scope>NUCLEOTIDE SEQUENCE [LARGE SCALE GENOMIC DNA]</scope>
    <source>
        <strain>ATCC BAA-1253 / SS9</strain>
    </source>
</reference>